<name>RPOB_BRASB</name>
<gene>
    <name evidence="1" type="primary">rpoB</name>
    <name type="ordered locus">BBta_5081</name>
</gene>
<accession>A5ELN7</accession>
<evidence type="ECO:0000255" key="1">
    <source>
        <dbReference type="HAMAP-Rule" id="MF_01321"/>
    </source>
</evidence>
<reference key="1">
    <citation type="journal article" date="2007" name="Science">
        <title>Legumes symbioses: absence of nod genes in photosynthetic bradyrhizobia.</title>
        <authorList>
            <person name="Giraud E."/>
            <person name="Moulin L."/>
            <person name="Vallenet D."/>
            <person name="Barbe V."/>
            <person name="Cytryn E."/>
            <person name="Avarre J.-C."/>
            <person name="Jaubert M."/>
            <person name="Simon D."/>
            <person name="Cartieaux F."/>
            <person name="Prin Y."/>
            <person name="Bena G."/>
            <person name="Hannibal L."/>
            <person name="Fardoux J."/>
            <person name="Kojadinovic M."/>
            <person name="Vuillet L."/>
            <person name="Lajus A."/>
            <person name="Cruveiller S."/>
            <person name="Rouy Z."/>
            <person name="Mangenot S."/>
            <person name="Segurens B."/>
            <person name="Dossat C."/>
            <person name="Franck W.L."/>
            <person name="Chang W.-S."/>
            <person name="Saunders E."/>
            <person name="Bruce D."/>
            <person name="Richardson P."/>
            <person name="Normand P."/>
            <person name="Dreyfus B."/>
            <person name="Pignol D."/>
            <person name="Stacey G."/>
            <person name="Emerich D."/>
            <person name="Vermeglio A."/>
            <person name="Medigue C."/>
            <person name="Sadowsky M."/>
        </authorList>
    </citation>
    <scope>NUCLEOTIDE SEQUENCE [LARGE SCALE GENOMIC DNA]</scope>
    <source>
        <strain>BTAi1 / ATCC BAA-1182</strain>
    </source>
</reference>
<dbReference type="EC" id="2.7.7.6" evidence="1"/>
<dbReference type="EMBL" id="CP000494">
    <property type="protein sequence ID" value="ABQ37081.1"/>
    <property type="molecule type" value="Genomic_DNA"/>
</dbReference>
<dbReference type="RefSeq" id="WP_012045052.1">
    <property type="nucleotide sequence ID" value="NC_009485.1"/>
</dbReference>
<dbReference type="SMR" id="A5ELN7"/>
<dbReference type="STRING" id="288000.BBta_5081"/>
<dbReference type="KEGG" id="bbt:BBta_5081"/>
<dbReference type="eggNOG" id="COG0085">
    <property type="taxonomic scope" value="Bacteria"/>
</dbReference>
<dbReference type="HOGENOM" id="CLU_000524_4_0_5"/>
<dbReference type="OrthoDB" id="9803954at2"/>
<dbReference type="Proteomes" id="UP000000246">
    <property type="component" value="Chromosome"/>
</dbReference>
<dbReference type="GO" id="GO:0000428">
    <property type="term" value="C:DNA-directed RNA polymerase complex"/>
    <property type="evidence" value="ECO:0007669"/>
    <property type="project" value="UniProtKB-KW"/>
</dbReference>
<dbReference type="GO" id="GO:0003677">
    <property type="term" value="F:DNA binding"/>
    <property type="evidence" value="ECO:0007669"/>
    <property type="project" value="UniProtKB-UniRule"/>
</dbReference>
<dbReference type="GO" id="GO:0003899">
    <property type="term" value="F:DNA-directed RNA polymerase activity"/>
    <property type="evidence" value="ECO:0007669"/>
    <property type="project" value="UniProtKB-UniRule"/>
</dbReference>
<dbReference type="GO" id="GO:0032549">
    <property type="term" value="F:ribonucleoside binding"/>
    <property type="evidence" value="ECO:0007669"/>
    <property type="project" value="InterPro"/>
</dbReference>
<dbReference type="GO" id="GO:0006351">
    <property type="term" value="P:DNA-templated transcription"/>
    <property type="evidence" value="ECO:0007669"/>
    <property type="project" value="UniProtKB-UniRule"/>
</dbReference>
<dbReference type="CDD" id="cd00653">
    <property type="entry name" value="RNA_pol_B_RPB2"/>
    <property type="match status" value="1"/>
</dbReference>
<dbReference type="FunFam" id="2.40.50.100:FF:000006">
    <property type="entry name" value="DNA-directed RNA polymerase subunit beta"/>
    <property type="match status" value="1"/>
</dbReference>
<dbReference type="FunFam" id="3.90.1800.10:FF:000001">
    <property type="entry name" value="DNA-directed RNA polymerase subunit beta"/>
    <property type="match status" value="1"/>
</dbReference>
<dbReference type="Gene3D" id="2.40.50.100">
    <property type="match status" value="1"/>
</dbReference>
<dbReference type="Gene3D" id="2.40.50.150">
    <property type="match status" value="1"/>
</dbReference>
<dbReference type="Gene3D" id="3.90.1100.10">
    <property type="match status" value="2"/>
</dbReference>
<dbReference type="Gene3D" id="2.30.150.10">
    <property type="entry name" value="DNA-directed RNA polymerase, beta subunit, external 1 domain"/>
    <property type="match status" value="1"/>
</dbReference>
<dbReference type="Gene3D" id="2.40.270.10">
    <property type="entry name" value="DNA-directed RNA polymerase, subunit 2, domain 6"/>
    <property type="match status" value="1"/>
</dbReference>
<dbReference type="Gene3D" id="3.90.1800.10">
    <property type="entry name" value="RNA polymerase alpha subunit dimerisation domain"/>
    <property type="match status" value="1"/>
</dbReference>
<dbReference type="Gene3D" id="3.90.1110.10">
    <property type="entry name" value="RNA polymerase Rpb2, domain 2"/>
    <property type="match status" value="1"/>
</dbReference>
<dbReference type="HAMAP" id="MF_01321">
    <property type="entry name" value="RNApol_bact_RpoB"/>
    <property type="match status" value="1"/>
</dbReference>
<dbReference type="InterPro" id="IPR042107">
    <property type="entry name" value="DNA-dir_RNA_pol_bsu_ext_1_sf"/>
</dbReference>
<dbReference type="InterPro" id="IPR019462">
    <property type="entry name" value="DNA-dir_RNA_pol_bsu_external_1"/>
</dbReference>
<dbReference type="InterPro" id="IPR015712">
    <property type="entry name" value="DNA-dir_RNA_pol_su2"/>
</dbReference>
<dbReference type="InterPro" id="IPR007120">
    <property type="entry name" value="DNA-dir_RNAP_su2_dom"/>
</dbReference>
<dbReference type="InterPro" id="IPR037033">
    <property type="entry name" value="DNA-dir_RNAP_su2_hyb_sf"/>
</dbReference>
<dbReference type="InterPro" id="IPR010243">
    <property type="entry name" value="RNA_pol_bsu_bac"/>
</dbReference>
<dbReference type="InterPro" id="IPR007121">
    <property type="entry name" value="RNA_pol_bsu_CS"/>
</dbReference>
<dbReference type="InterPro" id="IPR007644">
    <property type="entry name" value="RNA_pol_bsu_protrusion"/>
</dbReference>
<dbReference type="InterPro" id="IPR007642">
    <property type="entry name" value="RNA_pol_Rpb2_2"/>
</dbReference>
<dbReference type="InterPro" id="IPR037034">
    <property type="entry name" value="RNA_pol_Rpb2_2_sf"/>
</dbReference>
<dbReference type="InterPro" id="IPR007645">
    <property type="entry name" value="RNA_pol_Rpb2_3"/>
</dbReference>
<dbReference type="InterPro" id="IPR007641">
    <property type="entry name" value="RNA_pol_Rpb2_7"/>
</dbReference>
<dbReference type="InterPro" id="IPR014724">
    <property type="entry name" value="RNA_pol_RPB2_OB-fold"/>
</dbReference>
<dbReference type="NCBIfam" id="NF001616">
    <property type="entry name" value="PRK00405.1"/>
    <property type="match status" value="1"/>
</dbReference>
<dbReference type="NCBIfam" id="TIGR02013">
    <property type="entry name" value="rpoB"/>
    <property type="match status" value="1"/>
</dbReference>
<dbReference type="PANTHER" id="PTHR20856">
    <property type="entry name" value="DNA-DIRECTED RNA POLYMERASE I SUBUNIT 2"/>
    <property type="match status" value="1"/>
</dbReference>
<dbReference type="Pfam" id="PF04563">
    <property type="entry name" value="RNA_pol_Rpb2_1"/>
    <property type="match status" value="1"/>
</dbReference>
<dbReference type="Pfam" id="PF04561">
    <property type="entry name" value="RNA_pol_Rpb2_2"/>
    <property type="match status" value="2"/>
</dbReference>
<dbReference type="Pfam" id="PF04565">
    <property type="entry name" value="RNA_pol_Rpb2_3"/>
    <property type="match status" value="1"/>
</dbReference>
<dbReference type="Pfam" id="PF10385">
    <property type="entry name" value="RNA_pol_Rpb2_45"/>
    <property type="match status" value="1"/>
</dbReference>
<dbReference type="Pfam" id="PF00562">
    <property type="entry name" value="RNA_pol_Rpb2_6"/>
    <property type="match status" value="1"/>
</dbReference>
<dbReference type="Pfam" id="PF04560">
    <property type="entry name" value="RNA_pol_Rpb2_7"/>
    <property type="match status" value="1"/>
</dbReference>
<dbReference type="SUPFAM" id="SSF64484">
    <property type="entry name" value="beta and beta-prime subunits of DNA dependent RNA-polymerase"/>
    <property type="match status" value="1"/>
</dbReference>
<dbReference type="PROSITE" id="PS01166">
    <property type="entry name" value="RNA_POL_BETA"/>
    <property type="match status" value="1"/>
</dbReference>
<comment type="function">
    <text evidence="1">DNA-dependent RNA polymerase catalyzes the transcription of DNA into RNA using the four ribonucleoside triphosphates as substrates.</text>
</comment>
<comment type="catalytic activity">
    <reaction evidence="1">
        <text>RNA(n) + a ribonucleoside 5'-triphosphate = RNA(n+1) + diphosphate</text>
        <dbReference type="Rhea" id="RHEA:21248"/>
        <dbReference type="Rhea" id="RHEA-COMP:14527"/>
        <dbReference type="Rhea" id="RHEA-COMP:17342"/>
        <dbReference type="ChEBI" id="CHEBI:33019"/>
        <dbReference type="ChEBI" id="CHEBI:61557"/>
        <dbReference type="ChEBI" id="CHEBI:140395"/>
        <dbReference type="EC" id="2.7.7.6"/>
    </reaction>
</comment>
<comment type="subunit">
    <text evidence="1">The RNAP catalytic core consists of 2 alpha, 1 beta, 1 beta' and 1 omega subunit. When a sigma factor is associated with the core the holoenzyme is formed, which can initiate transcription.</text>
</comment>
<comment type="similarity">
    <text evidence="1">Belongs to the RNA polymerase beta chain family.</text>
</comment>
<feature type="chain" id="PRO_0000300286" description="DNA-directed RNA polymerase subunit beta">
    <location>
        <begin position="1"/>
        <end position="1372"/>
    </location>
</feature>
<protein>
    <recommendedName>
        <fullName evidence="1">DNA-directed RNA polymerase subunit beta</fullName>
        <shortName evidence="1">RNAP subunit beta</shortName>
        <ecNumber evidence="1">2.7.7.6</ecNumber>
    </recommendedName>
    <alternativeName>
        <fullName evidence="1">RNA polymerase subunit beta</fullName>
    </alternativeName>
    <alternativeName>
        <fullName evidence="1">Transcriptase subunit beta</fullName>
    </alternativeName>
</protein>
<proteinExistence type="inferred from homology"/>
<organism>
    <name type="scientific">Bradyrhizobium sp. (strain BTAi1 / ATCC BAA-1182)</name>
    <dbReference type="NCBI Taxonomy" id="288000"/>
    <lineage>
        <taxon>Bacteria</taxon>
        <taxon>Pseudomonadati</taxon>
        <taxon>Pseudomonadota</taxon>
        <taxon>Alphaproteobacteria</taxon>
        <taxon>Hyphomicrobiales</taxon>
        <taxon>Nitrobacteraceae</taxon>
        <taxon>Bradyrhizobium</taxon>
    </lineage>
</organism>
<sequence>MAQQTFTGRKRVRKFFGHIKEVAEMPNLIEVQKASYDQFLMVDEPTGGRPDEGLQAVFRSVFPISDFSGTSMLEFVRYEFEPPKYDVDECRQRGMTFAAPLKVTLRLIVFDIDEETGAKSVKDIKEQDVYMGDIPLMTMNGTFIVNGTERVIVSQMHRSPGVFFDHDKGKTHSSGKLLFAARVIPYRGSWLDIEFDAKDIVFARIDRRRKIPVTSLMFALGLDGEQILSTFYKKLIYKRIKEGWRVPFDANRFRGYSTVNDLIDADTGKVVLEAGKKLTVRTARQLQEKGLKALRMSDEELLGNYIAEDLVNPKTGEIYAEAGEEITDKLFKVLNEQGYKDLPLLDIDHVNVGPYIRNTLSADKNMTREDALFDIYRVMRPGEPPTLDSAQAMFQSLFFDAERYDLSAVGRVKMNMRLELDAPDTQRTLRKEDILAVIKTLVDLRDGKGEIDDIDHLGNRRVRSVGELMENQYRIGLLRMERAIKERMSSVDIDTVMPQDLINAKPAAAAVREFFGSSQLSQFMDQTNPLSEITHKRRLSALGPGGLTRERAGFEVRDVHPTHYGRICPIETPEGPNIGLINSLATFARVNKYGFVETPYRKVRDGRVTDEVVYLSAMEEGRYRVAQANVPLDAKGRFTEDLVVCRHAGEVVPMTPDKVDYMDVSPKQLVSVAAALIPFLENDDANRALMGSNMQRQAVPLVRAEAPFVGTGMEGVVARDSGAAIAARRSGVVDQIDATRVVIRATEDLDPTKSGVDIYRLMKFQRSNQSTCINQRPLVKVGDIVKKGDIIADGPSTDLGELALGRNVLVAFMPWNGYNFEDSILLSERIVKEDVFTSIHIEEFEVMARDTKLGPEEITRDIPNVSEEALKNLDEAGIVYIGAEVRAGDILVGKITPKGESPMTPEEKLLRAIFGEKASDVRDTSLRVPPGVQGTIVEVRVFNRHGVDKDERALAIEREEIERLAKDRDDEQAILDRNVYSRLADMLDGRQGISGPKGFKKDTKITRAVLDEYPKSQWWLFASANDKLMAEIEAMRKQYDESKKGLEQRFLDKVEKLQRGDELPPGVMKMVKVFVAVKRKIQPGDKMAGRHGNKGVVSKIVPIEDMPFLEDGTHADIVLNPLGVPSRMNVGQILETHLGWACAGLGKRIAQTVDAYLSKQDVKPLKETLKRIYGEDETIKSLNDNELLELGHNLSRGVPIATPVFDGAKEADIEEMLKLAGMDASGQSTVYDGRTGDPFDRKVTVGYIYMLKLHHLVDDKIHARSIGPYSLVTQQPLGGKAQFGGQRFGEMEVWALEAYGAAYTLQEMLTVKSDDVAGRTKVYEAIVRGDDTFEAGIPESFNVLVKEMRSLGLNVDLHNSKLGPAPTSEAAE</sequence>
<keyword id="KW-0240">DNA-directed RNA polymerase</keyword>
<keyword id="KW-0548">Nucleotidyltransferase</keyword>
<keyword id="KW-1185">Reference proteome</keyword>
<keyword id="KW-0804">Transcription</keyword>
<keyword id="KW-0808">Transferase</keyword>